<reference key="1">
    <citation type="journal article" date="1998" name="Nature">
        <title>Deciphering the biology of Mycobacterium tuberculosis from the complete genome sequence.</title>
        <authorList>
            <person name="Cole S.T."/>
            <person name="Brosch R."/>
            <person name="Parkhill J."/>
            <person name="Garnier T."/>
            <person name="Churcher C.M."/>
            <person name="Harris D.E."/>
            <person name="Gordon S.V."/>
            <person name="Eiglmeier K."/>
            <person name="Gas S."/>
            <person name="Barry C.E. III"/>
            <person name="Tekaia F."/>
            <person name="Badcock K."/>
            <person name="Basham D."/>
            <person name="Brown D."/>
            <person name="Chillingworth T."/>
            <person name="Connor R."/>
            <person name="Davies R.M."/>
            <person name="Devlin K."/>
            <person name="Feltwell T."/>
            <person name="Gentles S."/>
            <person name="Hamlin N."/>
            <person name="Holroyd S."/>
            <person name="Hornsby T."/>
            <person name="Jagels K."/>
            <person name="Krogh A."/>
            <person name="McLean J."/>
            <person name="Moule S."/>
            <person name="Murphy L.D."/>
            <person name="Oliver S."/>
            <person name="Osborne J."/>
            <person name="Quail M.A."/>
            <person name="Rajandream M.A."/>
            <person name="Rogers J."/>
            <person name="Rutter S."/>
            <person name="Seeger K."/>
            <person name="Skelton S."/>
            <person name="Squares S."/>
            <person name="Squares R."/>
            <person name="Sulston J.E."/>
            <person name="Taylor K."/>
            <person name="Whitehead S."/>
            <person name="Barrell B.G."/>
        </authorList>
    </citation>
    <scope>NUCLEOTIDE SEQUENCE [LARGE SCALE GENOMIC DNA]</scope>
    <source>
        <strain>ATCC 25618 / H37Rv</strain>
    </source>
</reference>
<comment type="subcellular location">
    <subcellularLocation>
        <location evidence="1">Cell membrane</location>
        <topology evidence="1">Multi-pass membrane protein</topology>
    </subcellularLocation>
</comment>
<comment type="similarity">
    <text evidence="1">Belongs to the UPF0182 family.</text>
</comment>
<dbReference type="EMBL" id="AL123456">
    <property type="protein sequence ID" value="CCP42786.1"/>
    <property type="molecule type" value="Genomic_DNA"/>
</dbReference>
<dbReference type="PIR" id="A70848">
    <property type="entry name" value="A70848"/>
</dbReference>
<dbReference type="RefSeq" id="NP_214578.1">
    <property type="nucleotide sequence ID" value="NC_000962.3"/>
</dbReference>
<dbReference type="RefSeq" id="WP_010886064.1">
    <property type="nucleotide sequence ID" value="NC_000962.3"/>
</dbReference>
<dbReference type="SMR" id="P9WFL5"/>
<dbReference type="STRING" id="83332.Rv0064"/>
<dbReference type="PaxDb" id="83332-Rv0064"/>
<dbReference type="GeneID" id="886996"/>
<dbReference type="KEGG" id="mtu:Rv0064"/>
<dbReference type="PATRIC" id="fig|83332.12.peg.72"/>
<dbReference type="TubercuList" id="Rv0064"/>
<dbReference type="eggNOG" id="COG1615">
    <property type="taxonomic scope" value="Bacteria"/>
</dbReference>
<dbReference type="InParanoid" id="P9WFL5"/>
<dbReference type="OrthoDB" id="9763654at2"/>
<dbReference type="PhylomeDB" id="P9WFL5"/>
<dbReference type="Proteomes" id="UP000001584">
    <property type="component" value="Chromosome"/>
</dbReference>
<dbReference type="GO" id="GO:0005576">
    <property type="term" value="C:extracellular region"/>
    <property type="evidence" value="ECO:0007005"/>
    <property type="project" value="MTBBASE"/>
</dbReference>
<dbReference type="GO" id="GO:0009274">
    <property type="term" value="C:peptidoglycan-based cell wall"/>
    <property type="evidence" value="ECO:0007005"/>
    <property type="project" value="MTBBASE"/>
</dbReference>
<dbReference type="GO" id="GO:0005886">
    <property type="term" value="C:plasma membrane"/>
    <property type="evidence" value="ECO:0007005"/>
    <property type="project" value="MTBBASE"/>
</dbReference>
<dbReference type="HAMAP" id="MF_01600">
    <property type="entry name" value="UPF0182"/>
    <property type="match status" value="1"/>
</dbReference>
<dbReference type="InterPro" id="IPR005372">
    <property type="entry name" value="UPF0182"/>
</dbReference>
<dbReference type="NCBIfam" id="NF000825">
    <property type="entry name" value="PRK00068.1"/>
    <property type="match status" value="1"/>
</dbReference>
<dbReference type="NCBIfam" id="NF009097">
    <property type="entry name" value="PRK12438.1"/>
    <property type="match status" value="1"/>
</dbReference>
<dbReference type="PANTHER" id="PTHR39344">
    <property type="entry name" value="UPF0182 PROTEIN SLL1060"/>
    <property type="match status" value="1"/>
</dbReference>
<dbReference type="PANTHER" id="PTHR39344:SF1">
    <property type="entry name" value="UPF0182 PROTEIN SLL1060"/>
    <property type="match status" value="1"/>
</dbReference>
<dbReference type="Pfam" id="PF03699">
    <property type="entry name" value="UPF0182"/>
    <property type="match status" value="1"/>
</dbReference>
<accession>P9WFL5</accession>
<accession>L0T5K5</accession>
<accession>O53609</accession>
<keyword id="KW-1003">Cell membrane</keyword>
<keyword id="KW-0472">Membrane</keyword>
<keyword id="KW-1185">Reference proteome</keyword>
<keyword id="KW-0812">Transmembrane</keyword>
<keyword id="KW-1133">Transmembrane helix</keyword>
<feature type="chain" id="PRO_0000157723" description="UPF0182 protein Rv0064">
    <location>
        <begin position="1"/>
        <end position="979"/>
    </location>
</feature>
<feature type="transmembrane region" description="Helical" evidence="1">
    <location>
        <begin position="19"/>
        <end position="41"/>
    </location>
</feature>
<feature type="transmembrane region" description="Helical" evidence="1">
    <location>
        <begin position="63"/>
        <end position="85"/>
    </location>
</feature>
<feature type="transmembrane region" description="Helical" evidence="1">
    <location>
        <begin position="114"/>
        <end position="136"/>
    </location>
</feature>
<feature type="transmembrane region" description="Helical" evidence="1">
    <location>
        <begin position="174"/>
        <end position="196"/>
    </location>
</feature>
<feature type="transmembrane region" description="Helical" evidence="1">
    <location>
        <begin position="208"/>
        <end position="230"/>
    </location>
</feature>
<feature type="transmembrane region" description="Helical" evidence="1">
    <location>
        <begin position="261"/>
        <end position="280"/>
    </location>
</feature>
<feature type="transmembrane region" description="Helical" evidence="1">
    <location>
        <begin position="285"/>
        <end position="307"/>
    </location>
</feature>
<feature type="region of interest" description="Disordered" evidence="2">
    <location>
        <begin position="898"/>
        <end position="948"/>
    </location>
</feature>
<feature type="compositionally biased region" description="Pro residues" evidence="2">
    <location>
        <begin position="913"/>
        <end position="946"/>
    </location>
</feature>
<gene>
    <name type="ordered locus">Rv0064</name>
    <name type="ORF">MTV030.07</name>
</gene>
<name>Y064_MYCTU</name>
<protein>
    <recommendedName>
        <fullName evidence="1">UPF0182 protein Rv0064</fullName>
    </recommendedName>
</protein>
<organism>
    <name type="scientific">Mycobacterium tuberculosis (strain ATCC 25618 / H37Rv)</name>
    <dbReference type="NCBI Taxonomy" id="83332"/>
    <lineage>
        <taxon>Bacteria</taxon>
        <taxon>Bacillati</taxon>
        <taxon>Actinomycetota</taxon>
        <taxon>Actinomycetes</taxon>
        <taxon>Mycobacteriales</taxon>
        <taxon>Mycobacteriaceae</taxon>
        <taxon>Mycobacterium</taxon>
        <taxon>Mycobacterium tuberculosis complex</taxon>
    </lineage>
</organism>
<evidence type="ECO:0000255" key="1">
    <source>
        <dbReference type="HAMAP-Rule" id="MF_01600"/>
    </source>
</evidence>
<evidence type="ECO:0000256" key="2">
    <source>
        <dbReference type="SAM" id="MobiDB-lite"/>
    </source>
</evidence>
<sequence length="979" mass="107369">METGSPGKRPVLPKRARLLVTAGMGMLALLLFGPRLVDIYVDWLWFGEVGFRSVWITVLLTRLAIVAAVALVVAGIVLAALLLAYRSRPFFVPDEPQRDPVAPLRSAVMRRPRLFGWGIAVTLGVVCGLIASFDWVKVQLFVHGGTFGIVDPEFGYDIGFFVFDLPFYRSVLNWLFVAVVLAFLASLLTHYLFGGLRLTTGRGMLTQAARVQLAVFAGAVVLLKAVAYWLDRYELLSSGRKEPTFTGAGYTDIHAELPAKLVLVAIAVLCAVSFFTAIFLRDLRIPAMAAALLVLSAILVGGLWPLLMEQFSVRPNAADVERPYIQRNIEATREAYRIGGDWVQYRSYPGIGTKQPRDVPVDVTTIAKVRLLDPHILSRTFTQQQQLKNFFSFAEILDIDRYRIDGELQDYIVGVRELSPKSLTGNQTDWINKHTVYTHGNGFVAAPANRVNAAARGAENISDSNSGYPIYAVSDIASLGSGRQVIPVEQPRVYYGEVIAQADPDYAIVGGAPGSAPREYDTDTSKYTYTGAGGVSIGNWFNRTVFATKVAQHKFLFSREIGSESKVLIHRDPKERVQRVAPWLTTDDNPYPVVVNGRIVWIVDAYTTLDTYPYAQRSSLEGPVTSPTGIVRQGKQVSYVRNSVKATVDAYDGTVTLFQFDRDDPVLRTWMRAFPGTVKSEDQIPDELRAHFRYPEDLFEVQRSLLAKYHVDEPREFFTTNAFWSVPSDPTNNANATQPPFYVLVGDQQSAQPSFRLASAMVGYNREFLSAYISAHSDPANYGKLTVLELPTDTLTQGPQQIQNSMISDTRVASERTLLERSNRIHYGNLLSLPIADGGVLYVEPLYTERISTSPSSSTFPQLSRVLVSVREPRTEGGVRVGYAPTLAESLDQVFGPGTGRVATARGGDAASAPPPGAGGPAPPQAVPPPRTTQPPAAPPRGPDVPPATVAELRETLADLRAVLDRLEKAIDAAETPGG</sequence>
<proteinExistence type="inferred from homology"/>